<proteinExistence type="inferred from homology"/>
<comment type="function">
    <text evidence="1">Involved in the association of MHC class I with transporter associated with antigen processing (TAP) and in the assembly of MHC class I with peptide (peptide loading).</text>
</comment>
<comment type="subunit">
    <text evidence="2">Heterodimer with PDIA3; disulfide-linked. Obligatory mediator for the interaction between newly assembled MHC class I molecules, calreticulin, PDIA3 and TAP. Up to 4 MHC class I/tapasin complexes bind to 1 TAP. Interacts with HLA-G-B2M complex; this interaction is required for loading of high affinity peptides. On its own or as part of MHC class I peptide loading complex, interacts with ligand-free MR1 or MR1-B2M complex, providing for stable MR1 pools ready for metabolite antigen processing.</text>
</comment>
<comment type="subcellular location">
    <subcellularLocation>
        <location evidence="1">Endoplasmic reticulum membrane</location>
        <topology evidence="1">Single-pass type I membrane protein</topology>
    </subcellularLocation>
</comment>
<comment type="domain">
    <text evidence="1">The N-terminus is required for efficient association with MHC class I molecule and for a stable interaction between MHC I and calreticulin. Binding to TAP is mediated by the C-terminal region (By similarity).</text>
</comment>
<name>TPSN_CANLF</name>
<organism>
    <name type="scientific">Canis lupus familiaris</name>
    <name type="common">Dog</name>
    <name type="synonym">Canis familiaris</name>
    <dbReference type="NCBI Taxonomy" id="9615"/>
    <lineage>
        <taxon>Eukaryota</taxon>
        <taxon>Metazoa</taxon>
        <taxon>Chordata</taxon>
        <taxon>Craniata</taxon>
        <taxon>Vertebrata</taxon>
        <taxon>Euteleostomi</taxon>
        <taxon>Mammalia</taxon>
        <taxon>Eutheria</taxon>
        <taxon>Laurasiatheria</taxon>
        <taxon>Carnivora</taxon>
        <taxon>Caniformia</taxon>
        <taxon>Canidae</taxon>
        <taxon>Canis</taxon>
    </lineage>
</organism>
<evidence type="ECO:0000250" key="1"/>
<evidence type="ECO:0000250" key="2">
    <source>
        <dbReference type="UniProtKB" id="O15533"/>
    </source>
</evidence>
<evidence type="ECO:0000255" key="3"/>
<evidence type="ECO:0000255" key="4">
    <source>
        <dbReference type="PROSITE-ProRule" id="PRU00114"/>
    </source>
</evidence>
<feature type="signal peptide" evidence="3">
    <location>
        <begin position="1"/>
        <end position="20"/>
    </location>
</feature>
<feature type="chain" id="PRO_0000041838" description="Tapasin">
    <location>
        <begin position="21"/>
        <end position="449"/>
    </location>
</feature>
<feature type="topological domain" description="Lumenal" evidence="3">
    <location>
        <begin position="21"/>
        <end position="413"/>
    </location>
</feature>
<feature type="transmembrane region" description="Helical" evidence="3">
    <location>
        <begin position="414"/>
        <end position="434"/>
    </location>
</feature>
<feature type="topological domain" description="Cytoplasmic" evidence="3">
    <location>
        <begin position="435"/>
        <end position="449"/>
    </location>
</feature>
<feature type="domain" description="Ig-like C1-type">
    <location>
        <begin position="292"/>
        <end position="399"/>
    </location>
</feature>
<feature type="site" description="May be involved in interaction with TAP" evidence="1">
    <location>
        <position position="428"/>
    </location>
</feature>
<feature type="glycosylation site" description="N-linked (GlcNAc...) asparagine" evidence="3">
    <location>
        <position position="253"/>
    </location>
</feature>
<feature type="disulfide bond" evidence="4">
    <location>
        <begin position="27"/>
        <end position="91"/>
    </location>
</feature>
<feature type="disulfide bond" description="Interchain (with C-57 in PDIA3)" evidence="4">
    <location>
        <position position="115"/>
    </location>
</feature>
<feature type="disulfide bond" evidence="4">
    <location>
        <begin position="315"/>
        <end position="382"/>
    </location>
</feature>
<gene>
    <name type="primary">TAPBP</name>
</gene>
<keyword id="KW-1015">Disulfide bond</keyword>
<keyword id="KW-0256">Endoplasmic reticulum</keyword>
<keyword id="KW-0325">Glycoprotein</keyword>
<keyword id="KW-0393">Immunoglobulin domain</keyword>
<keyword id="KW-0472">Membrane</keyword>
<keyword id="KW-1185">Reference proteome</keyword>
<keyword id="KW-0732">Signal</keyword>
<keyword id="KW-0812">Transmembrane</keyword>
<keyword id="KW-1133">Transmembrane helix</keyword>
<sequence>MKPLSLLLAVASALGTAVSAGPAVIECWMVEDAGGGRLAKKPAALLLRQGPGTPPPRPDLEPELYLKVHDPAGTLQAAVRRYPSDAPPPHCELSRFIPLPASARWARGLTPGRSCPRALDGAWLMASVLSPIFSLSCLLRPQSEPQPEPALFTSATAVLTVLTYSPIAQIQLGQDALLDLRFAYMPSISEAAASLAPGPPPFGLEWRRQHLGKGHLLLAATPGLHEQMPAAQDGAVAFAAWDDDDPWGPWTGNGTLWLPAVQPFQEGTYLATVHLPYLQGQVALELSVQKPPKISLTPAPLVWAAPGEAPPELLCLVSRFYPAKGLEVEWELRGGPEGSFQKAEGQSWLSALRHHSDGSVSLSAHLQPIPVTAKHHGARYACRVHHPTLPTLGRSAEVTLEVAGLSGPSLEDSVGLFLSAFLLLGLIKALGWVAASRSTSKDPKEKKAQ</sequence>
<accession>Q5TJE4</accession>
<protein>
    <recommendedName>
        <fullName>Tapasin</fullName>
        <shortName>TPN</shortName>
        <shortName>TPSN</shortName>
    </recommendedName>
    <alternativeName>
        <fullName>TAP-binding protein</fullName>
    </alternativeName>
</protein>
<reference key="1">
    <citation type="journal article" date="2005" name="Genomics">
        <title>Genomic sequence of the class II region of the canine MHC: comparison with the MHC of other mammalian species.</title>
        <authorList>
            <person name="Debenham S.L."/>
            <person name="Hart E.A."/>
            <person name="Ashurst J.L."/>
            <person name="Howe K.L."/>
            <person name="Quail M.A."/>
            <person name="Ollier W.E.R."/>
            <person name="Binns M.M."/>
        </authorList>
    </citation>
    <scope>NUCLEOTIDE SEQUENCE [LARGE SCALE GENOMIC DNA]</scope>
    <source>
        <strain>Doberman pinscher</strain>
    </source>
</reference>
<dbReference type="EMBL" id="AJ630366">
    <property type="protein sequence ID" value="CAI11444.1"/>
    <property type="molecule type" value="Genomic_DNA"/>
</dbReference>
<dbReference type="RefSeq" id="NP_001041566.1">
    <property type="nucleotide sequence ID" value="NM_001048101.3"/>
</dbReference>
<dbReference type="SMR" id="Q5TJE4"/>
<dbReference type="FunCoup" id="Q5TJE4">
    <property type="interactions" value="102"/>
</dbReference>
<dbReference type="STRING" id="9615.ENSCAFP00000001381"/>
<dbReference type="GlyCosmos" id="Q5TJE4">
    <property type="glycosylation" value="1 site, No reported glycans"/>
</dbReference>
<dbReference type="PaxDb" id="9612-ENSCAFP00000001381"/>
<dbReference type="Ensembl" id="ENSCAFT00000001502.5">
    <property type="protein sequence ID" value="ENSCAFP00000001381.3"/>
    <property type="gene ID" value="ENSCAFG00000000972.5"/>
</dbReference>
<dbReference type="Ensembl" id="ENSCAFT00030023379.1">
    <property type="protein sequence ID" value="ENSCAFP00030020382.1"/>
    <property type="gene ID" value="ENSCAFG00030012619.1"/>
</dbReference>
<dbReference type="Ensembl" id="ENSCAFT00040039393.1">
    <property type="protein sequence ID" value="ENSCAFP00040034371.1"/>
    <property type="gene ID" value="ENSCAFG00040021218.1"/>
</dbReference>
<dbReference type="Ensembl" id="ENSCAFT00845037810.1">
    <property type="protein sequence ID" value="ENSCAFP00845029626.1"/>
    <property type="gene ID" value="ENSCAFG00845021421.1"/>
</dbReference>
<dbReference type="GeneID" id="481740"/>
<dbReference type="KEGG" id="cfa:481740"/>
<dbReference type="CTD" id="6892"/>
<dbReference type="VEuPathDB" id="HostDB:ENSCAFG00845021421"/>
<dbReference type="VGNC" id="VGNC:47106">
    <property type="gene designation" value="TAPBP"/>
</dbReference>
<dbReference type="eggNOG" id="ENOG502QR0A">
    <property type="taxonomic scope" value="Eukaryota"/>
</dbReference>
<dbReference type="GeneTree" id="ENSGT00940000159200"/>
<dbReference type="HOGENOM" id="CLU_043155_0_0_1"/>
<dbReference type="InParanoid" id="Q5TJE4"/>
<dbReference type="OMA" id="YMPPTLE"/>
<dbReference type="OrthoDB" id="8929156at2759"/>
<dbReference type="TreeFam" id="TF334274"/>
<dbReference type="Reactome" id="R-CFA-983170">
    <property type="pathway name" value="Antigen Presentation: Folding, assembly and peptide loading of class I MHC"/>
</dbReference>
<dbReference type="Proteomes" id="UP000002254">
    <property type="component" value="Chromosome 12"/>
</dbReference>
<dbReference type="Proteomes" id="UP000694429">
    <property type="component" value="Chromosome 12"/>
</dbReference>
<dbReference type="Proteomes" id="UP000694542">
    <property type="component" value="Chromosome 12"/>
</dbReference>
<dbReference type="Proteomes" id="UP000805418">
    <property type="component" value="Chromosome 12"/>
</dbReference>
<dbReference type="Bgee" id="ENSCAFG00000000972">
    <property type="expression patterns" value="Expressed in mucosa of urinary bladder and 47 other cell types or tissues"/>
</dbReference>
<dbReference type="GO" id="GO:0042824">
    <property type="term" value="C:MHC class I peptide loading complex"/>
    <property type="evidence" value="ECO:0000318"/>
    <property type="project" value="GO_Central"/>
</dbReference>
<dbReference type="GO" id="GO:0023024">
    <property type="term" value="F:MHC class I protein complex binding"/>
    <property type="evidence" value="ECO:0000318"/>
    <property type="project" value="GO_Central"/>
</dbReference>
<dbReference type="GO" id="GO:0062061">
    <property type="term" value="F:TAP complex binding"/>
    <property type="evidence" value="ECO:0000318"/>
    <property type="project" value="GO_Central"/>
</dbReference>
<dbReference type="GO" id="GO:0019885">
    <property type="term" value="P:antigen processing and presentation of endogenous peptide antigen via MHC class I"/>
    <property type="evidence" value="ECO:0007669"/>
    <property type="project" value="InterPro"/>
</dbReference>
<dbReference type="GO" id="GO:0002502">
    <property type="term" value="P:peptide antigen assembly with MHC class I protein complex"/>
    <property type="evidence" value="ECO:0000318"/>
    <property type="project" value="GO_Central"/>
</dbReference>
<dbReference type="FunFam" id="2.60.40.10:FF:000924">
    <property type="entry name" value="TAP binding protein"/>
    <property type="match status" value="1"/>
</dbReference>
<dbReference type="Gene3D" id="2.60.40.10">
    <property type="entry name" value="Immunoglobulins"/>
    <property type="match status" value="3"/>
</dbReference>
<dbReference type="InterPro" id="IPR007110">
    <property type="entry name" value="Ig-like_dom"/>
</dbReference>
<dbReference type="InterPro" id="IPR036179">
    <property type="entry name" value="Ig-like_dom_sf"/>
</dbReference>
<dbReference type="InterPro" id="IPR013783">
    <property type="entry name" value="Ig-like_fold"/>
</dbReference>
<dbReference type="InterPro" id="IPR003006">
    <property type="entry name" value="Ig/MHC_CS"/>
</dbReference>
<dbReference type="InterPro" id="IPR003597">
    <property type="entry name" value="Ig_C1-set"/>
</dbReference>
<dbReference type="InterPro" id="IPR050380">
    <property type="entry name" value="Immune_Resp_Modulators"/>
</dbReference>
<dbReference type="InterPro" id="IPR008056">
    <property type="entry name" value="Tapasin"/>
</dbReference>
<dbReference type="PANTHER" id="PTHR23411">
    <property type="entry name" value="TAPASIN"/>
    <property type="match status" value="1"/>
</dbReference>
<dbReference type="Pfam" id="PF07654">
    <property type="entry name" value="C1-set"/>
    <property type="match status" value="1"/>
</dbReference>
<dbReference type="PRINTS" id="PR01669">
    <property type="entry name" value="TAPASIN"/>
</dbReference>
<dbReference type="SUPFAM" id="SSF48726">
    <property type="entry name" value="Immunoglobulin"/>
    <property type="match status" value="1"/>
</dbReference>
<dbReference type="PROSITE" id="PS50835">
    <property type="entry name" value="IG_LIKE"/>
    <property type="match status" value="1"/>
</dbReference>
<dbReference type="PROSITE" id="PS00290">
    <property type="entry name" value="IG_MHC"/>
    <property type="match status" value="1"/>
</dbReference>